<accession>Q9WVH4</accession>
<accession>D3Z6Y6</accession>
<accession>Q05CZ4</accession>
<keyword id="KW-0007">Acetylation</keyword>
<keyword id="KW-0010">Activator</keyword>
<keyword id="KW-0053">Apoptosis</keyword>
<keyword id="KW-0963">Cytoplasm</keyword>
<keyword id="KW-0238">DNA-binding</keyword>
<keyword id="KW-0472">Membrane</keyword>
<keyword id="KW-0488">Methylation</keyword>
<keyword id="KW-0496">Mitochondrion</keyword>
<keyword id="KW-1000">Mitochondrion outer membrane</keyword>
<keyword id="KW-0539">Nucleus</keyword>
<keyword id="KW-0597">Phosphoprotein</keyword>
<keyword id="KW-0656">Proto-oncogene</keyword>
<keyword id="KW-1185">Reference proteome</keyword>
<keyword id="KW-0804">Transcription</keyword>
<keyword id="KW-0805">Transcription regulation</keyword>
<keyword id="KW-0832">Ubl conjugation</keyword>
<name>FOXO3_MOUSE</name>
<protein>
    <recommendedName>
        <fullName evidence="14">Forkhead box protein O3</fullName>
    </recommendedName>
</protein>
<dbReference type="EMBL" id="AF114259">
    <property type="protein sequence ID" value="AAD42107.1"/>
    <property type="molecule type" value="mRNA"/>
</dbReference>
<dbReference type="EMBL" id="AK047413">
    <property type="protein sequence ID" value="BAC33049.1"/>
    <property type="molecule type" value="mRNA"/>
</dbReference>
<dbReference type="EMBL" id="AC116179">
    <property type="status" value="NOT_ANNOTATED_CDS"/>
    <property type="molecule type" value="Genomic_DNA"/>
</dbReference>
<dbReference type="EMBL" id="AC140402">
    <property type="status" value="NOT_ANNOTATED_CDS"/>
    <property type="molecule type" value="Genomic_DNA"/>
</dbReference>
<dbReference type="EMBL" id="CH466540">
    <property type="protein sequence ID" value="EDL04998.1"/>
    <property type="molecule type" value="Genomic_DNA"/>
</dbReference>
<dbReference type="EMBL" id="BC019532">
    <property type="protein sequence ID" value="AAH19532.1"/>
    <property type="status" value="ALT_SEQ"/>
    <property type="molecule type" value="mRNA"/>
</dbReference>
<dbReference type="CCDS" id="CCDS23810.1"/>
<dbReference type="RefSeq" id="NP_001363896.1">
    <property type="nucleotide sequence ID" value="NM_001376967.1"/>
</dbReference>
<dbReference type="RefSeq" id="NP_062714.1">
    <property type="nucleotide sequence ID" value="NM_019740.3"/>
</dbReference>
<dbReference type="RefSeq" id="XP_006512869.1">
    <property type="nucleotide sequence ID" value="XM_006512806.1"/>
</dbReference>
<dbReference type="BMRB" id="Q9WVH4"/>
<dbReference type="SMR" id="Q9WVH4"/>
<dbReference type="BioGRID" id="208010">
    <property type="interactions" value="36"/>
</dbReference>
<dbReference type="ComplexPortal" id="CPX-1144">
    <property type="entry name" value="FOXO3-MYC complex"/>
</dbReference>
<dbReference type="ComplexPortal" id="CPX-1148">
    <property type="entry name" value="Foxo3-Ywhaz complex"/>
</dbReference>
<dbReference type="FunCoup" id="Q9WVH4">
    <property type="interactions" value="3469"/>
</dbReference>
<dbReference type="IntAct" id="Q9WVH4">
    <property type="interactions" value="3"/>
</dbReference>
<dbReference type="MINT" id="Q9WVH4"/>
<dbReference type="STRING" id="10090.ENSMUSP00000101141"/>
<dbReference type="GlyGen" id="Q9WVH4">
    <property type="glycosylation" value="1 site, 1 N-linked glycan (1 site)"/>
</dbReference>
<dbReference type="iPTMnet" id="Q9WVH4"/>
<dbReference type="PhosphoSitePlus" id="Q9WVH4"/>
<dbReference type="jPOST" id="Q9WVH4"/>
<dbReference type="PaxDb" id="10090-ENSMUSP00000050683"/>
<dbReference type="PeptideAtlas" id="Q9WVH4"/>
<dbReference type="ProteomicsDB" id="267404"/>
<dbReference type="Pumba" id="Q9WVH4"/>
<dbReference type="DNASU" id="56484"/>
<dbReference type="Ensembl" id="ENSMUST00000056974.4">
    <property type="protein sequence ID" value="ENSMUSP00000050683.4"/>
    <property type="gene ID" value="ENSMUSG00000048756.12"/>
</dbReference>
<dbReference type="Ensembl" id="ENSMUST00000105502.8">
    <property type="protein sequence ID" value="ENSMUSP00000101141.2"/>
    <property type="gene ID" value="ENSMUSG00000048756.12"/>
</dbReference>
<dbReference type="Ensembl" id="ENSMUST00000175881.8">
    <property type="protein sequence ID" value="ENSMUSP00000135380.2"/>
    <property type="gene ID" value="ENSMUSG00000048756.12"/>
</dbReference>
<dbReference type="GeneID" id="56484"/>
<dbReference type="KEGG" id="mmu:56484"/>
<dbReference type="UCSC" id="uc007eyl.1">
    <property type="organism name" value="mouse"/>
</dbReference>
<dbReference type="AGR" id="MGI:1890081"/>
<dbReference type="CTD" id="2309"/>
<dbReference type="MGI" id="MGI:1890081">
    <property type="gene designation" value="Foxo3"/>
</dbReference>
<dbReference type="VEuPathDB" id="HostDB:ENSMUSG00000048756"/>
<dbReference type="eggNOG" id="KOG2294">
    <property type="taxonomic scope" value="Eukaryota"/>
</dbReference>
<dbReference type="GeneTree" id="ENSGT00940000159826"/>
<dbReference type="HOGENOM" id="CLU_023456_1_0_1"/>
<dbReference type="InParanoid" id="Q9WVH4"/>
<dbReference type="OMA" id="TGGMMQR"/>
<dbReference type="OrthoDB" id="5954824at2759"/>
<dbReference type="PhylomeDB" id="Q9WVH4"/>
<dbReference type="TreeFam" id="TF315583"/>
<dbReference type="Reactome" id="R-MMU-1181150">
    <property type="pathway name" value="Signaling by NODAL"/>
</dbReference>
<dbReference type="Reactome" id="R-MMU-198693">
    <property type="pathway name" value="AKT phosphorylates targets in the nucleus"/>
</dbReference>
<dbReference type="Reactome" id="R-MMU-5687128">
    <property type="pathway name" value="MAPK6/MAPK4 signaling"/>
</dbReference>
<dbReference type="Reactome" id="R-MMU-9607240">
    <property type="pathway name" value="FLT3 Signaling"/>
</dbReference>
<dbReference type="Reactome" id="R-MMU-9614399">
    <property type="pathway name" value="Regulation of localization of FOXO transcription factors"/>
</dbReference>
<dbReference type="Reactome" id="R-MMU-9617629">
    <property type="pathway name" value="Regulation of FOXO transcriptional activity by acetylation"/>
</dbReference>
<dbReference type="Reactome" id="R-MMU-9617828">
    <property type="pathway name" value="FOXO-mediated transcription of cell cycle genes"/>
</dbReference>
<dbReference type="Reactome" id="R-MMU-9634638">
    <property type="pathway name" value="Estrogen-dependent nuclear events downstream of ESR-membrane signaling"/>
</dbReference>
<dbReference type="Reactome" id="R-MMU-9841251">
    <property type="pathway name" value="Mitochondrial unfolded protein response (UPRmt)"/>
</dbReference>
<dbReference type="BioGRID-ORCS" id="56484">
    <property type="hits" value="4 hits in 80 CRISPR screens"/>
</dbReference>
<dbReference type="ChiTaRS" id="Foxo3">
    <property type="organism name" value="mouse"/>
</dbReference>
<dbReference type="PRO" id="PR:Q9WVH4"/>
<dbReference type="Proteomes" id="UP000000589">
    <property type="component" value="Chromosome 10"/>
</dbReference>
<dbReference type="RNAct" id="Q9WVH4">
    <property type="molecule type" value="protein"/>
</dbReference>
<dbReference type="Bgee" id="ENSMUSG00000048756">
    <property type="expression patterns" value="Expressed in secondary oocyte and 277 other cell types or tissues"/>
</dbReference>
<dbReference type="ExpressionAtlas" id="Q9WVH4">
    <property type="expression patterns" value="baseline and differential"/>
</dbReference>
<dbReference type="GO" id="GO:0005737">
    <property type="term" value="C:cytoplasm"/>
    <property type="evidence" value="ECO:0000314"/>
    <property type="project" value="UniProtKB"/>
</dbReference>
<dbReference type="GO" id="GO:0005829">
    <property type="term" value="C:cytosol"/>
    <property type="evidence" value="ECO:0000314"/>
    <property type="project" value="UniProtKB"/>
</dbReference>
<dbReference type="GO" id="GO:0016020">
    <property type="term" value="C:membrane"/>
    <property type="evidence" value="ECO:0000314"/>
    <property type="project" value="MGI"/>
</dbReference>
<dbReference type="GO" id="GO:0005759">
    <property type="term" value="C:mitochondrial matrix"/>
    <property type="evidence" value="ECO:0007669"/>
    <property type="project" value="UniProtKB-SubCell"/>
</dbReference>
<dbReference type="GO" id="GO:0005741">
    <property type="term" value="C:mitochondrial outer membrane"/>
    <property type="evidence" value="ECO:0000314"/>
    <property type="project" value="UniProtKB"/>
</dbReference>
<dbReference type="GO" id="GO:0005654">
    <property type="term" value="C:nucleoplasm"/>
    <property type="evidence" value="ECO:0000304"/>
    <property type="project" value="Reactome"/>
</dbReference>
<dbReference type="GO" id="GO:0005634">
    <property type="term" value="C:nucleus"/>
    <property type="evidence" value="ECO:0000314"/>
    <property type="project" value="UniProtKB"/>
</dbReference>
<dbReference type="GO" id="GO:0032991">
    <property type="term" value="C:protein-containing complex"/>
    <property type="evidence" value="ECO:0000314"/>
    <property type="project" value="UniProtKB"/>
</dbReference>
<dbReference type="GO" id="GO:0090571">
    <property type="term" value="C:RNA polymerase II transcription repressor complex"/>
    <property type="evidence" value="ECO:0000266"/>
    <property type="project" value="ComplexPortal"/>
</dbReference>
<dbReference type="GO" id="GO:0008013">
    <property type="term" value="F:beta-catenin binding"/>
    <property type="evidence" value="ECO:0007669"/>
    <property type="project" value="Ensembl"/>
</dbReference>
<dbReference type="GO" id="GO:0031490">
    <property type="term" value="F:chromatin DNA binding"/>
    <property type="evidence" value="ECO:0000314"/>
    <property type="project" value="UniProtKB"/>
</dbReference>
<dbReference type="GO" id="GO:0003677">
    <property type="term" value="F:DNA binding"/>
    <property type="evidence" value="ECO:0000314"/>
    <property type="project" value="MGI"/>
</dbReference>
<dbReference type="GO" id="GO:0001228">
    <property type="term" value="F:DNA-binding transcription activator activity, RNA polymerase II-specific"/>
    <property type="evidence" value="ECO:0000314"/>
    <property type="project" value="UniProtKB"/>
</dbReference>
<dbReference type="GO" id="GO:0003700">
    <property type="term" value="F:DNA-binding transcription factor activity"/>
    <property type="evidence" value="ECO:0000314"/>
    <property type="project" value="UniProtKB"/>
</dbReference>
<dbReference type="GO" id="GO:0001227">
    <property type="term" value="F:DNA-binding transcription repressor activity, RNA polymerase II-specific"/>
    <property type="evidence" value="ECO:0000316"/>
    <property type="project" value="MGI"/>
</dbReference>
<dbReference type="GO" id="GO:0034246">
    <property type="term" value="F:mitochondrial transcription factor activity"/>
    <property type="evidence" value="ECO:0000315"/>
    <property type="project" value="UniProtKB"/>
</dbReference>
<dbReference type="GO" id="GO:0019901">
    <property type="term" value="F:protein kinase binding"/>
    <property type="evidence" value="ECO:0007669"/>
    <property type="project" value="Ensembl"/>
</dbReference>
<dbReference type="GO" id="GO:0000978">
    <property type="term" value="F:RNA polymerase II cis-regulatory region sequence-specific DNA binding"/>
    <property type="evidence" value="ECO:0000314"/>
    <property type="project" value="UniProtKB"/>
</dbReference>
<dbReference type="GO" id="GO:0043565">
    <property type="term" value="F:sequence-specific DNA binding"/>
    <property type="evidence" value="ECO:0000314"/>
    <property type="project" value="MGI"/>
</dbReference>
<dbReference type="GO" id="GO:0000976">
    <property type="term" value="F:transcription cis-regulatory region binding"/>
    <property type="evidence" value="ECO:0000314"/>
    <property type="project" value="BHF-UCL"/>
</dbReference>
<dbReference type="GO" id="GO:0001221">
    <property type="term" value="F:transcription coregulator binding"/>
    <property type="evidence" value="ECO:0007669"/>
    <property type="project" value="Ensembl"/>
</dbReference>
<dbReference type="GO" id="GO:0001547">
    <property type="term" value="P:antral ovarian follicle growth"/>
    <property type="evidence" value="ECO:0000315"/>
    <property type="project" value="MGI"/>
</dbReference>
<dbReference type="GO" id="GO:0048854">
    <property type="term" value="P:brain morphogenesis"/>
    <property type="evidence" value="ECO:0000316"/>
    <property type="project" value="MGI"/>
</dbReference>
<dbReference type="GO" id="GO:0060070">
    <property type="term" value="P:canonical Wnt signaling pathway"/>
    <property type="evidence" value="ECO:0000316"/>
    <property type="project" value="MGI"/>
</dbReference>
<dbReference type="GO" id="GO:1904646">
    <property type="term" value="P:cellular response to amyloid-beta"/>
    <property type="evidence" value="ECO:0007669"/>
    <property type="project" value="Ensembl"/>
</dbReference>
<dbReference type="GO" id="GO:0071386">
    <property type="term" value="P:cellular response to corticosterone stimulus"/>
    <property type="evidence" value="ECO:0007669"/>
    <property type="project" value="Ensembl"/>
</dbReference>
<dbReference type="GO" id="GO:0042149">
    <property type="term" value="P:cellular response to glucose starvation"/>
    <property type="evidence" value="ECO:0007669"/>
    <property type="project" value="Ensembl"/>
</dbReference>
<dbReference type="GO" id="GO:0071333">
    <property type="term" value="P:cellular response to glucose stimulus"/>
    <property type="evidence" value="ECO:0007669"/>
    <property type="project" value="Ensembl"/>
</dbReference>
<dbReference type="GO" id="GO:0071456">
    <property type="term" value="P:cellular response to hypoxia"/>
    <property type="evidence" value="ECO:0007669"/>
    <property type="project" value="Ensembl"/>
</dbReference>
<dbReference type="GO" id="GO:1990090">
    <property type="term" value="P:cellular response to nerve growth factor stimulus"/>
    <property type="evidence" value="ECO:0007669"/>
    <property type="project" value="Ensembl"/>
</dbReference>
<dbReference type="GO" id="GO:0034599">
    <property type="term" value="P:cellular response to oxidative stress"/>
    <property type="evidence" value="ECO:0000314"/>
    <property type="project" value="UniProtKB"/>
</dbReference>
<dbReference type="GO" id="GO:0030330">
    <property type="term" value="P:DNA damage response, signal transduction by p53 class mediator"/>
    <property type="evidence" value="ECO:0000314"/>
    <property type="project" value="MGI"/>
</dbReference>
<dbReference type="GO" id="GO:0097192">
    <property type="term" value="P:extrinsic apoptotic signaling pathway in absence of ligand"/>
    <property type="evidence" value="ECO:0000316"/>
    <property type="project" value="MGI"/>
</dbReference>
<dbReference type="GO" id="GO:0042593">
    <property type="term" value="P:glucose homeostasis"/>
    <property type="evidence" value="ECO:0000315"/>
    <property type="project" value="MGI"/>
</dbReference>
<dbReference type="GO" id="GO:0001544">
    <property type="term" value="P:initiation of primordial ovarian follicle growth"/>
    <property type="evidence" value="ECO:0000315"/>
    <property type="project" value="MGI"/>
</dbReference>
<dbReference type="GO" id="GO:0006390">
    <property type="term" value="P:mitochondrial transcription"/>
    <property type="evidence" value="ECO:0000315"/>
    <property type="project" value="UniProtKB"/>
</dbReference>
<dbReference type="GO" id="GO:0090090">
    <property type="term" value="P:negative regulation of canonical Wnt signaling pathway"/>
    <property type="evidence" value="ECO:0000316"/>
    <property type="project" value="MGI"/>
</dbReference>
<dbReference type="GO" id="GO:0030336">
    <property type="term" value="P:negative regulation of cell migration"/>
    <property type="evidence" value="ECO:0007669"/>
    <property type="project" value="Ensembl"/>
</dbReference>
<dbReference type="GO" id="GO:0045665">
    <property type="term" value="P:negative regulation of neuron differentiation"/>
    <property type="evidence" value="ECO:0007669"/>
    <property type="project" value="Ensembl"/>
</dbReference>
<dbReference type="GO" id="GO:0000122">
    <property type="term" value="P:negative regulation of transcription by RNA polymerase II"/>
    <property type="evidence" value="ECO:0000314"/>
    <property type="project" value="ComplexPortal"/>
</dbReference>
<dbReference type="GO" id="GO:0097150">
    <property type="term" value="P:neuronal stem cell population maintenance"/>
    <property type="evidence" value="ECO:0000316"/>
    <property type="project" value="MGI"/>
</dbReference>
<dbReference type="GO" id="GO:0001556">
    <property type="term" value="P:oocyte maturation"/>
    <property type="evidence" value="ECO:0000315"/>
    <property type="project" value="MGI"/>
</dbReference>
<dbReference type="GO" id="GO:0001542">
    <property type="term" value="P:ovulation from ovarian follicle"/>
    <property type="evidence" value="ECO:0000315"/>
    <property type="project" value="MGI"/>
</dbReference>
<dbReference type="GO" id="GO:0010508">
    <property type="term" value="P:positive regulation of autophagy"/>
    <property type="evidence" value="ECO:0000314"/>
    <property type="project" value="UniProtKB"/>
</dbReference>
<dbReference type="GO" id="GO:0045893">
    <property type="term" value="P:positive regulation of DNA-templated transcription"/>
    <property type="evidence" value="ECO:0000314"/>
    <property type="project" value="UniProtKB"/>
</dbReference>
<dbReference type="GO" id="GO:2000353">
    <property type="term" value="P:positive regulation of endothelial cell apoptotic process"/>
    <property type="evidence" value="ECO:0007669"/>
    <property type="project" value="Ensembl"/>
</dbReference>
<dbReference type="GO" id="GO:0045648">
    <property type="term" value="P:positive regulation of erythrocyte differentiation"/>
    <property type="evidence" value="ECO:0000266"/>
    <property type="project" value="MGI"/>
</dbReference>
<dbReference type="GO" id="GO:1901300">
    <property type="term" value="P:positive regulation of hydrogen peroxide-mediated programmed cell death"/>
    <property type="evidence" value="ECO:0007669"/>
    <property type="project" value="Ensembl"/>
</dbReference>
<dbReference type="GO" id="GO:1902895">
    <property type="term" value="P:positive regulation of miRNA transcription"/>
    <property type="evidence" value="ECO:0000315"/>
    <property type="project" value="BHF-UCL"/>
</dbReference>
<dbReference type="GO" id="GO:0014737">
    <property type="term" value="P:positive regulation of muscle atrophy"/>
    <property type="evidence" value="ECO:0000314"/>
    <property type="project" value="UniProtKB"/>
</dbReference>
<dbReference type="GO" id="GO:0043525">
    <property type="term" value="P:positive regulation of neuron apoptotic process"/>
    <property type="evidence" value="ECO:0007669"/>
    <property type="project" value="Ensembl"/>
</dbReference>
<dbReference type="GO" id="GO:1903428">
    <property type="term" value="P:positive regulation of reactive oxygen species biosynthetic process"/>
    <property type="evidence" value="ECO:0007669"/>
    <property type="project" value="Ensembl"/>
</dbReference>
<dbReference type="GO" id="GO:0045591">
    <property type="term" value="P:positive regulation of regulatory T cell differentiation"/>
    <property type="evidence" value="ECO:0000250"/>
    <property type="project" value="UniProtKB"/>
</dbReference>
<dbReference type="GO" id="GO:0045944">
    <property type="term" value="P:positive regulation of transcription by RNA polymerase II"/>
    <property type="evidence" value="ECO:0000266"/>
    <property type="project" value="MGI"/>
</dbReference>
<dbReference type="GO" id="GO:0006355">
    <property type="term" value="P:regulation of DNA-templated transcription"/>
    <property type="evidence" value="ECO:0000314"/>
    <property type="project" value="MGI"/>
</dbReference>
<dbReference type="GO" id="GO:2000177">
    <property type="term" value="P:regulation of neural precursor cell proliferation"/>
    <property type="evidence" value="ECO:0000316"/>
    <property type="project" value="MGI"/>
</dbReference>
<dbReference type="GO" id="GO:2000377">
    <property type="term" value="P:regulation of reactive oxygen species metabolic process"/>
    <property type="evidence" value="ECO:0000316"/>
    <property type="project" value="MGI"/>
</dbReference>
<dbReference type="GO" id="GO:0006357">
    <property type="term" value="P:regulation of transcription by RNA polymerase II"/>
    <property type="evidence" value="ECO:0000314"/>
    <property type="project" value="UniProtKB"/>
</dbReference>
<dbReference type="GO" id="GO:0006417">
    <property type="term" value="P:regulation of translation"/>
    <property type="evidence" value="ECO:0000250"/>
    <property type="project" value="UniProtKB"/>
</dbReference>
<dbReference type="GO" id="GO:0071548">
    <property type="term" value="P:response to dexamethasone"/>
    <property type="evidence" value="ECO:0007669"/>
    <property type="project" value="Ensembl"/>
</dbReference>
<dbReference type="GO" id="GO:0070542">
    <property type="term" value="P:response to fatty acid"/>
    <property type="evidence" value="ECO:0000314"/>
    <property type="project" value="UniProtKB"/>
</dbReference>
<dbReference type="GO" id="GO:0042594">
    <property type="term" value="P:response to starvation"/>
    <property type="evidence" value="ECO:0000314"/>
    <property type="project" value="UniProtKB"/>
</dbReference>
<dbReference type="GO" id="GO:1990785">
    <property type="term" value="P:response to water-immersion restraint stress"/>
    <property type="evidence" value="ECO:0007669"/>
    <property type="project" value="Ensembl"/>
</dbReference>
<dbReference type="GO" id="GO:0009410">
    <property type="term" value="P:response to xenobiotic stimulus"/>
    <property type="evidence" value="ECO:0007669"/>
    <property type="project" value="Ensembl"/>
</dbReference>
<dbReference type="GO" id="GO:0033209">
    <property type="term" value="P:tumor necrosis factor-mediated signaling pathway"/>
    <property type="evidence" value="ECO:0000250"/>
    <property type="project" value="UniProtKB"/>
</dbReference>
<dbReference type="CDD" id="cd20061">
    <property type="entry name" value="FH_FOXO3"/>
    <property type="match status" value="1"/>
</dbReference>
<dbReference type="FunFam" id="1.10.10.10:FF:000032">
    <property type="entry name" value="Forkhead box protein O4"/>
    <property type="match status" value="1"/>
</dbReference>
<dbReference type="Gene3D" id="6.10.250.1690">
    <property type="match status" value="2"/>
</dbReference>
<dbReference type="Gene3D" id="1.10.10.10">
    <property type="entry name" value="Winged helix-like DNA-binding domain superfamily/Winged helix DNA-binding domain"/>
    <property type="match status" value="1"/>
</dbReference>
<dbReference type="InterPro" id="IPR001766">
    <property type="entry name" value="Fork_head_dom"/>
</dbReference>
<dbReference type="InterPro" id="IPR032067">
    <property type="entry name" value="FOXO-TAD"/>
</dbReference>
<dbReference type="InterPro" id="IPR032068">
    <property type="entry name" value="FOXO_KIX-bd"/>
</dbReference>
<dbReference type="InterPro" id="IPR030456">
    <property type="entry name" value="TF_fork_head_CS_2"/>
</dbReference>
<dbReference type="InterPro" id="IPR036388">
    <property type="entry name" value="WH-like_DNA-bd_sf"/>
</dbReference>
<dbReference type="InterPro" id="IPR036390">
    <property type="entry name" value="WH_DNA-bd_sf"/>
</dbReference>
<dbReference type="PANTHER" id="PTHR45767">
    <property type="entry name" value="FORKHEAD BOX PROTEIN O"/>
    <property type="match status" value="1"/>
</dbReference>
<dbReference type="PANTHER" id="PTHR45767:SF4">
    <property type="entry name" value="FORKHEAD BOX PROTEIN O3-RELATED"/>
    <property type="match status" value="1"/>
</dbReference>
<dbReference type="Pfam" id="PF00250">
    <property type="entry name" value="Forkhead"/>
    <property type="match status" value="1"/>
</dbReference>
<dbReference type="Pfam" id="PF16676">
    <property type="entry name" value="FOXO-TAD"/>
    <property type="match status" value="1"/>
</dbReference>
<dbReference type="Pfam" id="PF16675">
    <property type="entry name" value="FOXO_KIX_bdg"/>
    <property type="match status" value="1"/>
</dbReference>
<dbReference type="PRINTS" id="PR00053">
    <property type="entry name" value="FORKHEAD"/>
</dbReference>
<dbReference type="SMART" id="SM00339">
    <property type="entry name" value="FH"/>
    <property type="match status" value="1"/>
</dbReference>
<dbReference type="SUPFAM" id="SSF46785">
    <property type="entry name" value="Winged helix' DNA-binding domain"/>
    <property type="match status" value="1"/>
</dbReference>
<dbReference type="PROSITE" id="PS00658">
    <property type="entry name" value="FORK_HEAD_2"/>
    <property type="match status" value="1"/>
</dbReference>
<dbReference type="PROSITE" id="PS50039">
    <property type="entry name" value="FORK_HEAD_3"/>
    <property type="match status" value="1"/>
</dbReference>
<comment type="function">
    <text evidence="1 5 6 8 9 10 12">Transcriptional activator that recognizes and binds to the DNA sequence 5'-[AG]TAAA[TC]A-3' and regulates different processes, such as apoptosis and autophagy (PubMed:18054315, PubMed:18054316, PubMed:23805378). Acts as a positive regulator of autophagy in skeletal muscle: in starved cells, enters the nucleus following dephosphorylation and binds the promoters of autophagy genes, such as GABARAP1L, MAP1LC3B and ATG12, thereby activating their expression, resulting in proteolysis of skeletal muscle proteins (PubMed:18054315, PubMed:18054316, PubMed:25402684). Triggers apoptosis in the absence of survival factors, including neuronal cell death upon oxidative stress (By similarity). Participates in post-transcriptional regulation of MYC: following phosphorylation by MAPKAPK5, promotes induction of miR-34b and miR-34c expression, 2 post-transcriptional regulators of MYC that bind to the 3'UTR of MYC transcript and prevent its translation (By similarity). In response to metabolic stress, translocates into the mitochondria where it promotes mtDNA transcription (PubMed:23283301). Also acts as a key regulator of chondrogenic commitment of skeletal progenitor cells in response to lipid availability: when lipids levels are low, translocates to the nucleus and promotes expression of SOX9, which induces chondrogenic commitment and suppresses fatty acid oxidation (PubMed:32103177). Also acts as a key regulator of regulatory T-cells (Treg) differentiation by activating expression of FOXP3 (By similarity).</text>
</comment>
<comment type="subunit">
    <text evidence="1 4 8 9">Upon metabolic stress, forms a complex composed of FOXO3, SIRT3 and mitochondrial RNA polymerase POLRMT; the complex is recruited to mtDNA in a SIRT3-dependent manner (PubMed:23283301). Also forms a complex composed of FOXO3, SIRT3, TFAM and POLRMT (By similarity). Interacts with SIRT2; the interaction occurs independently of SIRT2 deacetylase activity (PubMed:17521387). Interacts with YWHAB/14-3-3-beta and YWHAZ/14-3-3-zeta, which are required for cytosolic sequestration. Upon oxidative stress, interacts with STK4/MST1, which disrupts interaction with YWHAB/14-3-3-beta and leads to nuclear translocation. Interacts with PIM1. Interacts with DDIT3/CHOP. Interacts (deacetylated form) with SKP2. Interacts with CHUK and IKBKB (By similarity). Interacts with CAMK2A, CAMK2B and calcineurin A (PubMed:23805378). Interacts with NUPR1; this interaction represses FOXO3 transactivation (By similarity).</text>
</comment>
<comment type="interaction">
    <interactant intactId="EBI-6127038">
        <id>Q9WVH4</id>
    </interactant>
    <interactant intactId="EBI-6126630">
        <id>P0DJI6</id>
        <label>Fcor</label>
    </interactant>
    <organismsDiffer>false</organismsDiffer>
    <experiments>2</experiments>
</comment>
<comment type="interaction">
    <interactant intactId="EBI-6127038">
        <id>Q9WVH4</id>
    </interactant>
    <interactant intactId="EBI-1268586">
        <id>Q8WTS6</id>
        <label>SETD7</label>
    </interactant>
    <organismsDiffer>true</organismsDiffer>
    <experiments>5</experiments>
</comment>
<comment type="subcellular location">
    <subcellularLocation>
        <location evidence="5 8 12">Cytoplasm</location>
        <location evidence="5 8 12">Cytosol</location>
    </subcellularLocation>
    <subcellularLocation>
        <location evidence="5 8 12">Nucleus</location>
    </subcellularLocation>
    <subcellularLocation>
        <location evidence="8 11">Mitochondrion matrix</location>
    </subcellularLocation>
    <subcellularLocation>
        <location evidence="11">Mitochondrion outer membrane</location>
        <topology evidence="11">Peripheral membrane protein</topology>
        <orientation evidence="11">Cytoplasmic side</orientation>
    </subcellularLocation>
    <text evidence="1 5 8 11 12">Retention in the cytoplasm contributes to its inactivation (By similarity). Translocates to the nucleus upon oxidative stress and in the absence of survival factors (By similarity). Translocates from the cytosol to the nucleus following dephosphorylation in response to autophagy-inducing stimuli (PubMed:18054315). Translocates in a AMPK-dependent manner into the mitochondrion in response to metabolic stress (PubMed:23283301, PubMed:29445193). Serum deprivation increases localization to the nucleus, leading to activate expression of SOX9 and subsequent chondrogenesis (PubMed:32103177).</text>
</comment>
<comment type="tissue specificity">
    <text evidence="7 8 11">Expressed in white and brown adipose tissues (at protein level) (PubMed:22510882). Expressed in liver, kidney, lung and colon (at protein level) (PubMed:29445193). Expressed in skeletal muscles (at protein level) (PubMed:23283301).</text>
</comment>
<comment type="PTM">
    <text evidence="1 4">Deacetylation by SIRT1 or SIRT2 stimulates interaction of FOXO3 with SKP2 and facilitates SCF(SKP2)-mediated FOXO3 ubiquitination and proteasomal degradation (By similarity). Deacetylation by SIRT2 stimulates FOXO3-mediated transcriptional activity in response to oxidative stress (PubMed:17521387). Deacetylated by SIRT3 (By similarity). Deacetylation by SIRT3 stimulates FOXO3-mediated mtDNA transcriptional activity in response to metabolic stress (By similarity).</text>
</comment>
<comment type="PTM">
    <text evidence="1 9 15">In the presence of survival factors such as IGF1, phosphorylated on Thr-32 and Ser-252 by AKT1/PKB (Probable). This phosphorylated form then interacts with 14-3-3 proteins and is retained in the cytoplasm (Probable). Survival factor withdrawal induces dephosphorylation and promotes translocation to the nucleus where the dephosphorylated protein induces transcription of target genes and triggers apoptosis (By similarity). Although AKT1/PKB doesn't appear to phosphorylate Ser-314 directly, it may activate other kinases that trigger phosphorylation at this residue (By similarity). Phosphorylated by STK4/MST1 on Ser-208 upon oxidative stress, which leads to dissociation from YWHAB/14-3-3-beta and nuclear translocation (By similarity). Phosphorylated by PIM1 (By similarity). Phosphorylation by AMPK leads to the activation of transcriptional activity without affecting subcellular localization (By similarity). Phosphorylated by AMPK on Ser-30 in response to metabolic stress which mediates FOXO3 mitochondrial translocation (By similarity). Phosphorylation by MAPKAPK5 promotes nuclear localization and DNA-binding, leading to induction of miR-34b and miR-34c expression, 2 post-transcriptional regulators of MYC that bind to the 3'UTR of MYC transcript and prevent its translation (By similarity). Phosphorylated by CHUK/IKKA and IKBKB/IKKB (By similarity). TNF-induced inactivation of FOXO3 requires its phosphorylation at Ser-643 by IKBKB/IKKB which promotes FOXO3 retention in the cytoplasm, polyubiquitination and ubiquitin-mediated proteasomal degradation (By similarity). May be dephosphorylated by calcineurin A on Ser-298 which abolishes FOXO3 transcriptional activity (PubMed:23805378). Phosphorylation at Ser-252 promotes its degradation by the proteasome (By similarity). Dephosphorylation at Ser-252 by protein phosphatase 2A (PPP2CA) promotes its stabilization; interaction with PPP2CA is enhanced by AMBRA1 (By similarity).</text>
</comment>
<comment type="PTM">
    <text evidence="1">Heavily methylated by SET9 which decreases stability, while moderately increasing transcriptional activity. The main methylation site is Lys-270. Methylation doesn't affect subcellular location.</text>
</comment>
<comment type="PTM">
    <text evidence="1">Polyubiquitinated. Ubiquitinated by a SCF complex containing SKP2, leading to proteasomal degradation.</text>
</comment>
<comment type="PTM">
    <text evidence="11">The N-terminus is cleaved following import into the mitochondrion.</text>
</comment>
<comment type="sequence caution" evidence="14">
    <conflict type="miscellaneous discrepancy">
        <sequence resource="EMBL-CDS" id="AAH19532"/>
    </conflict>
    <text>Contaminating sequence. Potential poly-A sequence.</text>
</comment>
<sequence length="672" mass="71064">MAEAPASPVPLSPLEVELDPEFEPQSRPRSCTWPLQRPELQASPAKPSGETAADSMIPEEDDDEDDEDGGGRASSAMVIGGGVSSTLGSGLLLEDSAMLLAPGGQDLGSGPASAAGALSGGTPTQLQPQQPLPQPQPGAAGGSGQPRKCSSRRNAWGNLSYADLITRAIESSPDKRLTLSQIYEWMVRCVPYFKDKGDSNSSAGWKNSIRHNLSLHSRFMRVQNEGTGKSSWWIINPDGGKSGKAPRRRAVSMDNSNKYTKSRGRAAKKKAALQAAPESADDSPSQLSKWPGSPTSRSSDELDAWTDFRSRTNSNASTVSGRLSPILASTELDDVQDDDGPLSPMLYSSSASLSPSVSKPCTVELPRLTDMAGTMNLNDGLAENLMDDLLDNIALPPSQPSPPGGLMQRGSSFPYTAKSSGLGSPTGSFNSTVFGPSSLNSLRQSPMQTIQENRPATFSSVSHYGNQTLQDLLASDSLSHSDVMMTQSDPLMSQASTAVSAQNARRNVMLRNDPMMSFAAQPTQGSLVNQNLLHHQHQTQGALGGSRALSNSVSNMGLSDSSSLGSAKHQQQSPASQSMQTLSDSLSGSSLYSASANLPVMGHDKFPSDLDLDMFNGSLECDMESIIRSELMDADGLDFNFDSLISTQNVVGLNVGNFTGAKQASSQSWVPG</sequence>
<gene>
    <name evidence="16" type="primary">Foxo3</name>
    <name evidence="13" type="synonym">Fkhr2</name>
    <name evidence="13" type="synonym">Foxo3a</name>
</gene>
<evidence type="ECO:0000250" key="1">
    <source>
        <dbReference type="UniProtKB" id="O43524"/>
    </source>
</evidence>
<evidence type="ECO:0000255" key="2">
    <source>
        <dbReference type="PROSITE-ProRule" id="PRU00089"/>
    </source>
</evidence>
<evidence type="ECO:0000256" key="3">
    <source>
        <dbReference type="SAM" id="MobiDB-lite"/>
    </source>
</evidence>
<evidence type="ECO:0000269" key="4">
    <source>
    </source>
</evidence>
<evidence type="ECO:0000269" key="5">
    <source>
    </source>
</evidence>
<evidence type="ECO:0000269" key="6">
    <source>
    </source>
</evidence>
<evidence type="ECO:0000269" key="7">
    <source>
    </source>
</evidence>
<evidence type="ECO:0000269" key="8">
    <source>
    </source>
</evidence>
<evidence type="ECO:0000269" key="9">
    <source>
    </source>
</evidence>
<evidence type="ECO:0000269" key="10">
    <source>
    </source>
</evidence>
<evidence type="ECO:0000269" key="11">
    <source>
    </source>
</evidence>
<evidence type="ECO:0000269" key="12">
    <source>
    </source>
</evidence>
<evidence type="ECO:0000303" key="13">
    <source>
    </source>
</evidence>
<evidence type="ECO:0000305" key="14"/>
<evidence type="ECO:0000305" key="15">
    <source>
    </source>
</evidence>
<evidence type="ECO:0000312" key="16">
    <source>
        <dbReference type="MGI" id="MGI:1890081"/>
    </source>
</evidence>
<evidence type="ECO:0007744" key="17">
    <source>
    </source>
</evidence>
<evidence type="ECO:0007744" key="18">
    <source>
    </source>
</evidence>
<reference key="1">
    <citation type="journal article" date="2001" name="Mamm. Genome">
        <title>Identification and characterization of members of the FKHR (FOX O) subclass of winged-helix transcription factors in the mouse.</title>
        <authorList>
            <person name="Biggs W.H. III"/>
            <person name="Cavenee W.K."/>
            <person name="Arden K.C."/>
        </authorList>
    </citation>
    <scope>NUCLEOTIDE SEQUENCE [MRNA]</scope>
</reference>
<reference key="2">
    <citation type="journal article" date="2005" name="Science">
        <title>The transcriptional landscape of the mammalian genome.</title>
        <authorList>
            <person name="Carninci P."/>
            <person name="Kasukawa T."/>
            <person name="Katayama S."/>
            <person name="Gough J."/>
            <person name="Frith M.C."/>
            <person name="Maeda N."/>
            <person name="Oyama R."/>
            <person name="Ravasi T."/>
            <person name="Lenhard B."/>
            <person name="Wells C."/>
            <person name="Kodzius R."/>
            <person name="Shimokawa K."/>
            <person name="Bajic V.B."/>
            <person name="Brenner S.E."/>
            <person name="Batalov S."/>
            <person name="Forrest A.R."/>
            <person name="Zavolan M."/>
            <person name="Davis M.J."/>
            <person name="Wilming L.G."/>
            <person name="Aidinis V."/>
            <person name="Allen J.E."/>
            <person name="Ambesi-Impiombato A."/>
            <person name="Apweiler R."/>
            <person name="Aturaliya R.N."/>
            <person name="Bailey T.L."/>
            <person name="Bansal M."/>
            <person name="Baxter L."/>
            <person name="Beisel K.W."/>
            <person name="Bersano T."/>
            <person name="Bono H."/>
            <person name="Chalk A.M."/>
            <person name="Chiu K.P."/>
            <person name="Choudhary V."/>
            <person name="Christoffels A."/>
            <person name="Clutterbuck D.R."/>
            <person name="Crowe M.L."/>
            <person name="Dalla E."/>
            <person name="Dalrymple B.P."/>
            <person name="de Bono B."/>
            <person name="Della Gatta G."/>
            <person name="di Bernardo D."/>
            <person name="Down T."/>
            <person name="Engstrom P."/>
            <person name="Fagiolini M."/>
            <person name="Faulkner G."/>
            <person name="Fletcher C.F."/>
            <person name="Fukushima T."/>
            <person name="Furuno M."/>
            <person name="Futaki S."/>
            <person name="Gariboldi M."/>
            <person name="Georgii-Hemming P."/>
            <person name="Gingeras T.R."/>
            <person name="Gojobori T."/>
            <person name="Green R.E."/>
            <person name="Gustincich S."/>
            <person name="Harbers M."/>
            <person name="Hayashi Y."/>
            <person name="Hensch T.K."/>
            <person name="Hirokawa N."/>
            <person name="Hill D."/>
            <person name="Huminiecki L."/>
            <person name="Iacono M."/>
            <person name="Ikeo K."/>
            <person name="Iwama A."/>
            <person name="Ishikawa T."/>
            <person name="Jakt M."/>
            <person name="Kanapin A."/>
            <person name="Katoh M."/>
            <person name="Kawasawa Y."/>
            <person name="Kelso J."/>
            <person name="Kitamura H."/>
            <person name="Kitano H."/>
            <person name="Kollias G."/>
            <person name="Krishnan S.P."/>
            <person name="Kruger A."/>
            <person name="Kummerfeld S.K."/>
            <person name="Kurochkin I.V."/>
            <person name="Lareau L.F."/>
            <person name="Lazarevic D."/>
            <person name="Lipovich L."/>
            <person name="Liu J."/>
            <person name="Liuni S."/>
            <person name="McWilliam S."/>
            <person name="Madan Babu M."/>
            <person name="Madera M."/>
            <person name="Marchionni L."/>
            <person name="Matsuda H."/>
            <person name="Matsuzawa S."/>
            <person name="Miki H."/>
            <person name="Mignone F."/>
            <person name="Miyake S."/>
            <person name="Morris K."/>
            <person name="Mottagui-Tabar S."/>
            <person name="Mulder N."/>
            <person name="Nakano N."/>
            <person name="Nakauchi H."/>
            <person name="Ng P."/>
            <person name="Nilsson R."/>
            <person name="Nishiguchi S."/>
            <person name="Nishikawa S."/>
            <person name="Nori F."/>
            <person name="Ohara O."/>
            <person name="Okazaki Y."/>
            <person name="Orlando V."/>
            <person name="Pang K.C."/>
            <person name="Pavan W.J."/>
            <person name="Pavesi G."/>
            <person name="Pesole G."/>
            <person name="Petrovsky N."/>
            <person name="Piazza S."/>
            <person name="Reed J."/>
            <person name="Reid J.F."/>
            <person name="Ring B.Z."/>
            <person name="Ringwald M."/>
            <person name="Rost B."/>
            <person name="Ruan Y."/>
            <person name="Salzberg S.L."/>
            <person name="Sandelin A."/>
            <person name="Schneider C."/>
            <person name="Schoenbach C."/>
            <person name="Sekiguchi K."/>
            <person name="Semple C.A."/>
            <person name="Seno S."/>
            <person name="Sessa L."/>
            <person name="Sheng Y."/>
            <person name="Shibata Y."/>
            <person name="Shimada H."/>
            <person name="Shimada K."/>
            <person name="Silva D."/>
            <person name="Sinclair B."/>
            <person name="Sperling S."/>
            <person name="Stupka E."/>
            <person name="Sugiura K."/>
            <person name="Sultana R."/>
            <person name="Takenaka Y."/>
            <person name="Taki K."/>
            <person name="Tammoja K."/>
            <person name="Tan S.L."/>
            <person name="Tang S."/>
            <person name="Taylor M.S."/>
            <person name="Tegner J."/>
            <person name="Teichmann S.A."/>
            <person name="Ueda H.R."/>
            <person name="van Nimwegen E."/>
            <person name="Verardo R."/>
            <person name="Wei C.L."/>
            <person name="Yagi K."/>
            <person name="Yamanishi H."/>
            <person name="Zabarovsky E."/>
            <person name="Zhu S."/>
            <person name="Zimmer A."/>
            <person name="Hide W."/>
            <person name="Bult C."/>
            <person name="Grimmond S.M."/>
            <person name="Teasdale R.D."/>
            <person name="Liu E.T."/>
            <person name="Brusic V."/>
            <person name="Quackenbush J."/>
            <person name="Wahlestedt C."/>
            <person name="Mattick J.S."/>
            <person name="Hume D.A."/>
            <person name="Kai C."/>
            <person name="Sasaki D."/>
            <person name="Tomaru Y."/>
            <person name="Fukuda S."/>
            <person name="Kanamori-Katayama M."/>
            <person name="Suzuki M."/>
            <person name="Aoki J."/>
            <person name="Arakawa T."/>
            <person name="Iida J."/>
            <person name="Imamura K."/>
            <person name="Itoh M."/>
            <person name="Kato T."/>
            <person name="Kawaji H."/>
            <person name="Kawagashira N."/>
            <person name="Kawashima T."/>
            <person name="Kojima M."/>
            <person name="Kondo S."/>
            <person name="Konno H."/>
            <person name="Nakano K."/>
            <person name="Ninomiya N."/>
            <person name="Nishio T."/>
            <person name="Okada M."/>
            <person name="Plessy C."/>
            <person name="Shibata K."/>
            <person name="Shiraki T."/>
            <person name="Suzuki S."/>
            <person name="Tagami M."/>
            <person name="Waki K."/>
            <person name="Watahiki A."/>
            <person name="Okamura-Oho Y."/>
            <person name="Suzuki H."/>
            <person name="Kawai J."/>
            <person name="Hayashizaki Y."/>
        </authorList>
    </citation>
    <scope>NUCLEOTIDE SEQUENCE [LARGE SCALE MRNA]</scope>
    <source>
        <strain>C57BL/6J</strain>
        <tissue>Cerebellum</tissue>
    </source>
</reference>
<reference key="3">
    <citation type="journal article" date="2009" name="PLoS Biol.">
        <title>Lineage-specific biology revealed by a finished genome assembly of the mouse.</title>
        <authorList>
            <person name="Church D.M."/>
            <person name="Goodstadt L."/>
            <person name="Hillier L.W."/>
            <person name="Zody M.C."/>
            <person name="Goldstein S."/>
            <person name="She X."/>
            <person name="Bult C.J."/>
            <person name="Agarwala R."/>
            <person name="Cherry J.L."/>
            <person name="DiCuccio M."/>
            <person name="Hlavina W."/>
            <person name="Kapustin Y."/>
            <person name="Meric P."/>
            <person name="Maglott D."/>
            <person name="Birtle Z."/>
            <person name="Marques A.C."/>
            <person name="Graves T."/>
            <person name="Zhou S."/>
            <person name="Teague B."/>
            <person name="Potamousis K."/>
            <person name="Churas C."/>
            <person name="Place M."/>
            <person name="Herschleb J."/>
            <person name="Runnheim R."/>
            <person name="Forrest D."/>
            <person name="Amos-Landgraf J."/>
            <person name="Schwartz D.C."/>
            <person name="Cheng Z."/>
            <person name="Lindblad-Toh K."/>
            <person name="Eichler E.E."/>
            <person name="Ponting C.P."/>
        </authorList>
    </citation>
    <scope>NUCLEOTIDE SEQUENCE [LARGE SCALE GENOMIC DNA]</scope>
    <source>
        <strain>C57BL/6J</strain>
    </source>
</reference>
<reference key="4">
    <citation type="submission" date="2005-07" db="EMBL/GenBank/DDBJ databases">
        <authorList>
            <person name="Mural R.J."/>
            <person name="Adams M.D."/>
            <person name="Myers E.W."/>
            <person name="Smith H.O."/>
            <person name="Venter J.C."/>
        </authorList>
    </citation>
    <scope>NUCLEOTIDE SEQUENCE [LARGE SCALE GENOMIC DNA]</scope>
</reference>
<reference key="5">
    <citation type="journal article" date="2004" name="Genome Res.">
        <title>The status, quality, and expansion of the NIH full-length cDNA project: the Mammalian Gene Collection (MGC).</title>
        <authorList>
            <consortium name="The MGC Project Team"/>
        </authorList>
    </citation>
    <scope>NUCLEOTIDE SEQUENCE [LARGE SCALE MRNA] OF 1-255</scope>
</reference>
<reference key="6">
    <citation type="journal article" date="2007" name="Aging Cell">
        <title>SIRT2 deacetylates FOXO3a in response to oxidative stress and caloric restriction.</title>
        <authorList>
            <person name="Wang F."/>
            <person name="Nguyen M."/>
            <person name="Qin F.X."/>
            <person name="Tong Q."/>
        </authorList>
    </citation>
    <scope>ACETYLATION</scope>
    <scope>DEACETYLATION BY SIRT2</scope>
    <scope>INTERACTION WITH SIRT2</scope>
</reference>
<reference key="7">
    <citation type="journal article" date="2007" name="Cell Metab.">
        <title>FoxO3 coordinately activates protein degradation by the autophagic/lysosomal and proteasomal pathways in atrophying muscle cells.</title>
        <authorList>
            <person name="Zhao J."/>
            <person name="Brault J.J."/>
            <person name="Schild A."/>
            <person name="Cao P."/>
            <person name="Sandri M."/>
            <person name="Schiaffino S."/>
            <person name="Lecker S.H."/>
            <person name="Goldberg A.L."/>
        </authorList>
    </citation>
    <scope>FUNCTION</scope>
</reference>
<reference key="8">
    <citation type="journal article" date="2007" name="Cell Metab.">
        <title>FoxO3 controls autophagy in skeletal muscle in vivo.</title>
        <authorList>
            <person name="Mammucari C."/>
            <person name="Milan G."/>
            <person name="Romanello V."/>
            <person name="Masiero E."/>
            <person name="Rudolf R."/>
            <person name="Del Piccolo P."/>
            <person name="Burden S.J."/>
            <person name="Di Lisi R."/>
            <person name="Sandri C."/>
            <person name="Zhao J."/>
            <person name="Goldberg A.L."/>
            <person name="Schiaffino S."/>
            <person name="Sandri M."/>
        </authorList>
    </citation>
    <scope>FUNCTION</scope>
    <scope>SUBCELLULAR LOCATION</scope>
    <scope>PHOSPHORYLATION</scope>
</reference>
<reference key="9">
    <citation type="journal article" date="2010" name="Cell">
        <title>A tissue-specific atlas of mouse protein phosphorylation and expression.</title>
        <authorList>
            <person name="Huttlin E.L."/>
            <person name="Jedrychowski M.P."/>
            <person name="Elias J.E."/>
            <person name="Goswami T."/>
            <person name="Rad R."/>
            <person name="Beausoleil S.A."/>
            <person name="Villen J."/>
            <person name="Haas W."/>
            <person name="Sowa M.E."/>
            <person name="Gygi S.P."/>
        </authorList>
    </citation>
    <scope>PHOSPHORYLATION [LARGE SCALE ANALYSIS] AT SER-293</scope>
    <scope>IDENTIFICATION BY MASS SPECTROMETRY [LARGE SCALE ANALYSIS]</scope>
    <source>
        <tissue>Kidney</tissue>
        <tissue>Pancreas</tissue>
        <tissue>Spleen</tissue>
        <tissue>Testis</tissue>
    </source>
</reference>
<reference key="10">
    <citation type="journal article" date="2012" name="EMBO J.">
        <title>Novel repressor regulates insulin sensitivity through interaction with Foxo1.</title>
        <authorList>
            <person name="Nakae J."/>
            <person name="Cao Y."/>
            <person name="Hakuno F."/>
            <person name="Takemori H."/>
            <person name="Kawano Y."/>
            <person name="Sekioka R."/>
            <person name="Abe T."/>
            <person name="Kiyonari H."/>
            <person name="Tanaka T."/>
            <person name="Sakai J."/>
            <person name="Takahashi S."/>
            <person name="Itoh H."/>
        </authorList>
    </citation>
    <scope>TISSUE SPECIFICITY</scope>
</reference>
<reference key="11">
    <citation type="journal article" date="2013" name="Cell. Mol. Life Sci.">
        <title>A novel AMPK-dependent FoxO3A-SIRT3 intramitochondrial complex sensing glucose levels.</title>
        <authorList>
            <person name="Peserico A."/>
            <person name="Chiacchiera F."/>
            <person name="Grossi V."/>
            <person name="Matrone A."/>
            <person name="Latorre D."/>
            <person name="Simonatto M."/>
            <person name="Fusella A."/>
            <person name="Ryall J.G."/>
            <person name="Finley L.W."/>
            <person name="Haigis M.C."/>
            <person name="Villani G."/>
            <person name="Puri P.L."/>
            <person name="Sartorelli V."/>
            <person name="Simone C."/>
        </authorList>
    </citation>
    <scope>FUNCTION</scope>
    <scope>IDENTIFICATION IN A COMPLEX WITH SIRT3 AND POLRMT</scope>
    <scope>SUBCELLULAR LOCATION</scope>
    <scope>TISSUE SPECIFICITY</scope>
</reference>
<reference key="12">
    <citation type="journal article" date="2013" name="Elife">
        <title>CAMKII and Calcineurin regulate the lifespan of Caenorhabditis elegans through the FOXO transcription factor DAF-16.</title>
        <authorList>
            <person name="Tao L."/>
            <person name="Xie Q."/>
            <person name="Ding Y.H."/>
            <person name="Li S.T."/>
            <person name="Peng S."/>
            <person name="Zhang Y.P."/>
            <person name="Tan D."/>
            <person name="Yuan Z."/>
            <person name="Dong M.Q."/>
        </authorList>
    </citation>
    <scope>FUNCTION</scope>
    <scope>INTERACTION WITH CALCINEURIN A; CAMK2A AND CAMK2B</scope>
    <scope>PHOSPHORYLATION AT SER-298</scope>
    <scope>MUTAGENESIS OF SER-298</scope>
    <scope>IDENTIFICATION BY MASS SPECTROMETRY</scope>
</reference>
<reference key="13">
    <citation type="journal article" date="2013" name="Mol. Cell">
        <title>SIRT5-mediated lysine desuccinylation impacts diverse metabolic pathways.</title>
        <authorList>
            <person name="Park J."/>
            <person name="Chen Y."/>
            <person name="Tishkoff D.X."/>
            <person name="Peng C."/>
            <person name="Tan M."/>
            <person name="Dai L."/>
            <person name="Xie Z."/>
            <person name="Zhang Y."/>
            <person name="Zwaans B.M."/>
            <person name="Skinner M.E."/>
            <person name="Lombard D.B."/>
            <person name="Zhao Y."/>
        </authorList>
    </citation>
    <scope>ACETYLATION [LARGE SCALE ANALYSIS] AT LYS-241</scope>
    <scope>IDENTIFICATION BY MASS SPECTROMETRY [LARGE SCALE ANALYSIS]</scope>
    <source>
        <tissue>Embryonic fibroblast</tissue>
    </source>
</reference>
<reference key="14">
    <citation type="journal article" date="2014" name="Nat. Cell Biol.">
        <title>Foxk proteins repress the initiation of starvation-induced atrophy and autophagy programs.</title>
        <authorList>
            <person name="Bowman C.J."/>
            <person name="Ayer D.E."/>
            <person name="Dynlacht B.D."/>
        </authorList>
    </citation>
    <scope>FUNCTION</scope>
</reference>
<reference key="15">
    <citation type="journal article" date="2018" name="Cell Death Dis.">
        <title>Uncoupling FoxO3A mitochondrial and nuclear functions in cancer cells undergoing metabolic stress and chemotherapy.</title>
        <authorList>
            <person name="Celestini V."/>
            <person name="Tezil T."/>
            <person name="Russo L."/>
            <person name="Fasano C."/>
            <person name="Sanese P."/>
            <person name="Forte G."/>
            <person name="Peserico A."/>
            <person name="Lepore Signorile M."/>
            <person name="Longo G."/>
            <person name="De Rasmo D."/>
            <person name="Signorile A."/>
            <person name="Gadaleta R.M."/>
            <person name="Scialpi N."/>
            <person name="Terao M."/>
            <person name="Garattini E."/>
            <person name="Cocco T."/>
            <person name="Villani G."/>
            <person name="Moschetta A."/>
            <person name="Grossi V."/>
            <person name="Simone C."/>
        </authorList>
    </citation>
    <scope>SUBCELLULAR LOCATION</scope>
    <scope>TISSUE SPECIFICITY</scope>
    <scope>PROTEOLYTIC CLEAVAGE</scope>
</reference>
<reference key="16">
    <citation type="journal article" date="2020" name="Nature">
        <title>Lipid availability determines fate of skeletal progenitor cells via SOX9.</title>
        <authorList>
            <person name="van Gastel N."/>
            <person name="Stegen S."/>
            <person name="Eelen G."/>
            <person name="Schoors S."/>
            <person name="Carlier A."/>
            <person name="Daniels V.W."/>
            <person name="Baryawno N."/>
            <person name="Przybylski D."/>
            <person name="Depypere M."/>
            <person name="Stiers P.J."/>
            <person name="Lambrechts D."/>
            <person name="Van Looveren R."/>
            <person name="Torrekens S."/>
            <person name="Sharda A."/>
            <person name="Agostinis P."/>
            <person name="Lambrechts D."/>
            <person name="Maes F."/>
            <person name="Swinnen J.V."/>
            <person name="Geris L."/>
            <person name="Van Oosterwyck H."/>
            <person name="Thienpont B."/>
            <person name="Carmeliet P."/>
            <person name="Scadden D.T."/>
            <person name="Carmeliet G."/>
        </authorList>
    </citation>
    <scope>FUNCTION</scope>
    <scope>SUBCELLULAR LOCATION</scope>
</reference>
<organism>
    <name type="scientific">Mus musculus</name>
    <name type="common">Mouse</name>
    <dbReference type="NCBI Taxonomy" id="10090"/>
    <lineage>
        <taxon>Eukaryota</taxon>
        <taxon>Metazoa</taxon>
        <taxon>Chordata</taxon>
        <taxon>Craniata</taxon>
        <taxon>Vertebrata</taxon>
        <taxon>Euteleostomi</taxon>
        <taxon>Mammalia</taxon>
        <taxon>Eutheria</taxon>
        <taxon>Euarchontoglires</taxon>
        <taxon>Glires</taxon>
        <taxon>Rodentia</taxon>
        <taxon>Myomorpha</taxon>
        <taxon>Muroidea</taxon>
        <taxon>Muridae</taxon>
        <taxon>Murinae</taxon>
        <taxon>Mus</taxon>
        <taxon>Mus</taxon>
    </lineage>
</organism>
<proteinExistence type="evidence at protein level"/>
<feature type="chain" id="PRO_0000415334" description="Forkhead box protein O3">
    <location>
        <begin position="1"/>
        <end position="672"/>
    </location>
</feature>
<feature type="DNA-binding region" description="Fork-head" evidence="2">
    <location>
        <begin position="156"/>
        <end position="250"/>
    </location>
</feature>
<feature type="region of interest" description="Disordered" evidence="3">
    <location>
        <begin position="1"/>
        <end position="85"/>
    </location>
</feature>
<feature type="region of interest" description="Required for mitochondrial import" evidence="1">
    <location>
        <begin position="80"/>
        <end position="108"/>
    </location>
</feature>
<feature type="region of interest" description="Disordered" evidence="3">
    <location>
        <begin position="110"/>
        <end position="152"/>
    </location>
</feature>
<feature type="region of interest" description="Disordered" evidence="3">
    <location>
        <begin position="230"/>
        <end position="301"/>
    </location>
</feature>
<feature type="region of interest" description="Mediates interaction with CHUK/IKKA and IKBKB/IKKB" evidence="1">
    <location>
        <begin position="299"/>
        <end position="672"/>
    </location>
</feature>
<feature type="region of interest" description="Disordered" evidence="3">
    <location>
        <begin position="399"/>
        <end position="441"/>
    </location>
</feature>
<feature type="region of interest" description="Disordered" evidence="3">
    <location>
        <begin position="535"/>
        <end position="583"/>
    </location>
</feature>
<feature type="short sequence motif" description="Nuclear localization signal" evidence="1">
    <location>
        <begin position="241"/>
        <end position="258"/>
    </location>
</feature>
<feature type="compositionally biased region" description="Acidic residues" evidence="3">
    <location>
        <begin position="57"/>
        <end position="68"/>
    </location>
</feature>
<feature type="compositionally biased region" description="Low complexity" evidence="3">
    <location>
        <begin position="110"/>
        <end position="129"/>
    </location>
</feature>
<feature type="compositionally biased region" description="Basic residues" evidence="3">
    <location>
        <begin position="260"/>
        <end position="271"/>
    </location>
</feature>
<feature type="compositionally biased region" description="Polar residues" evidence="3">
    <location>
        <begin position="282"/>
        <end position="297"/>
    </location>
</feature>
<feature type="compositionally biased region" description="Polar residues" evidence="3">
    <location>
        <begin position="409"/>
        <end position="441"/>
    </location>
</feature>
<feature type="compositionally biased region" description="Polar residues" evidence="3">
    <location>
        <begin position="548"/>
        <end position="577"/>
    </location>
</feature>
<feature type="modified residue" description="Phosphoserine" evidence="1">
    <location>
        <position position="30"/>
    </location>
</feature>
<feature type="modified residue" description="Phosphothreonine" evidence="1">
    <location>
        <position position="32"/>
    </location>
</feature>
<feature type="modified residue" description="N6-methyllysine" evidence="1">
    <location>
        <position position="46"/>
    </location>
</feature>
<feature type="modified residue" description="N6-methyllysine" evidence="1">
    <location>
        <position position="148"/>
    </location>
</feature>
<feature type="modified residue" description="Phosphothreonine" evidence="1">
    <location>
        <position position="178"/>
    </location>
</feature>
<feature type="modified residue" description="Phosphoserine" evidence="1">
    <location>
        <position position="208"/>
    </location>
</feature>
<feature type="modified residue" description="Phosphoserine" evidence="1">
    <location>
        <position position="214"/>
    </location>
</feature>
<feature type="modified residue" description="N6-methyllysine" evidence="1">
    <location>
        <position position="229"/>
    </location>
</feature>
<feature type="modified residue" description="N6-acetyllysine" evidence="18">
    <location>
        <position position="241"/>
    </location>
</feature>
<feature type="modified residue" description="Phosphoserine" evidence="1">
    <location>
        <position position="252"/>
    </location>
</feature>
<feature type="modified residue" description="N6-methyllysine" evidence="1">
    <location>
        <position position="261"/>
    </location>
</feature>
<feature type="modified residue" description="N6-methyllysine" evidence="1">
    <location>
        <position position="270"/>
    </location>
</feature>
<feature type="modified residue" description="Phosphoserine" evidence="1">
    <location>
        <position position="279"/>
    </location>
</feature>
<feature type="modified residue" description="Phosphoserine" evidence="1">
    <location>
        <position position="283"/>
    </location>
</feature>
<feature type="modified residue" description="N6-methyllysine" evidence="1">
    <location>
        <position position="289"/>
    </location>
</feature>
<feature type="modified residue" description="Phosphoserine" evidence="17">
    <location>
        <position position="293"/>
    </location>
</feature>
<feature type="modified residue" description="Phosphoserine; by CaMK2A" evidence="9">
    <location>
        <position position="298"/>
    </location>
</feature>
<feature type="modified residue" description="Phosphoserine" evidence="1">
    <location>
        <position position="310"/>
    </location>
</feature>
<feature type="modified residue" description="Phosphoserine; by SGK1" evidence="1">
    <location>
        <position position="314"/>
    </location>
</feature>
<feature type="modified residue" description="Phosphoserine; by AMPK" evidence="1">
    <location>
        <position position="398"/>
    </location>
</feature>
<feature type="modified residue" description="Phosphoserine; by AMPK" evidence="1">
    <location>
        <position position="412"/>
    </location>
</feature>
<feature type="modified residue" description="N6-methyllysine" evidence="1">
    <location>
        <position position="418"/>
    </location>
</feature>
<feature type="modified residue" description="Phosphoserine" evidence="1">
    <location>
        <position position="420"/>
    </location>
</feature>
<feature type="modified residue" description="Phosphoserine; by MAPKAPK5" evidence="1">
    <location>
        <position position="550"/>
    </location>
</feature>
<feature type="modified residue" description="Phosphoserine; by AMPK and MAPKAPK5" evidence="1">
    <location>
        <position position="554"/>
    </location>
</feature>
<feature type="modified residue" description="Phosphoserine; by AMPK" evidence="1">
    <location>
        <position position="587"/>
    </location>
</feature>
<feature type="modified residue" description="Phosphoserine; by AMPK" evidence="1">
    <location>
        <position position="625"/>
    </location>
</feature>
<feature type="modified residue" description="Phosphoserine; by IKKB" evidence="1">
    <location>
        <position position="643"/>
    </location>
</feature>
<feature type="mutagenesis site" description="Abolishes phosphorylation by CAMK2A. Loss of transcriptional activity." evidence="9">
    <original>S</original>
    <variation>A</variation>
    <location>
        <position position="298"/>
    </location>
</feature>